<sequence>MKKVCFSFVIMVIALIAAGCGAEDTGTSEDGEGLKIVTSFSILGDVLENIAGERSSVTYIVPIGEEPHEYEPVPSDFQAVSDADVFYVNGLGLEEWLQRLVENTSDVDVVEVSPTIDALPLEESDGLDPHAWLDVKNVMKYVEVIRDDLVERDPDGAEIYVANAEAYLQDLQELEEWIHDQVTTIPEEQRTIVISENAYRYFGEAYGFDTVGIWELNSHEEGTPGQISRVVDIVKELDLPAVFVETTVNKSFMTTVSNDSGVDIAGEVYTDAVGLEGSGAETYIDMMKHNVDTFVSGLSQ</sequence>
<comment type="function">
    <text evidence="1">Probably part of ATP-binding cassette (ABC) transport system MntABCD involved in manganese import (By similarity). Binds manganese and delivers it to the membrane permease for translocation into the cytoplasm (By similarity).</text>
</comment>
<comment type="subcellular location">
    <subcellularLocation>
        <location evidence="3">Cell membrane</location>
        <topology evidence="3">Lipid-anchor</topology>
    </subcellularLocation>
</comment>
<comment type="similarity">
    <text evidence="4">Belongs to the bacterial solute-binding protein 9 family.</text>
</comment>
<reference key="1">
    <citation type="journal article" date="2000" name="Nucleic Acids Res.">
        <title>Complete genome sequence of the alkaliphilic bacterium Bacillus halodurans and genomic sequence comparison with Bacillus subtilis.</title>
        <authorList>
            <person name="Takami H."/>
            <person name="Nakasone K."/>
            <person name="Takaki Y."/>
            <person name="Maeno G."/>
            <person name="Sasaki R."/>
            <person name="Masui N."/>
            <person name="Fuji F."/>
            <person name="Hirama C."/>
            <person name="Nakamura Y."/>
            <person name="Ogasawara N."/>
            <person name="Kuhara S."/>
            <person name="Horikoshi K."/>
        </authorList>
    </citation>
    <scope>NUCLEOTIDE SEQUENCE [LARGE SCALE GENOMIC DNA]</scope>
    <source>
        <strain>ATCC BAA-125 / DSM 18197 / FERM 7344 / JCM 9153 / C-125</strain>
    </source>
</reference>
<keyword id="KW-1003">Cell membrane</keyword>
<keyword id="KW-0449">Lipoprotein</keyword>
<keyword id="KW-0464">Manganese</keyword>
<keyword id="KW-0472">Membrane</keyword>
<keyword id="KW-0479">Metal-binding</keyword>
<keyword id="KW-0564">Palmitate</keyword>
<keyword id="KW-1185">Reference proteome</keyword>
<keyword id="KW-0732">Signal</keyword>
<keyword id="KW-0813">Transport</keyword>
<feature type="signal peptide" evidence="3">
    <location>
        <begin position="1"/>
        <end position="19"/>
    </location>
</feature>
<feature type="chain" id="PRO_0000031879" description="Manganese-binding lipoprotein MntA">
    <location>
        <begin position="20"/>
        <end position="300"/>
    </location>
</feature>
<feature type="binding site" evidence="2">
    <location>
        <position position="68"/>
    </location>
    <ligand>
        <name>Mn(2+)</name>
        <dbReference type="ChEBI" id="CHEBI:29035"/>
    </ligand>
</feature>
<feature type="binding site" evidence="2">
    <location>
        <position position="130"/>
    </location>
    <ligand>
        <name>Mn(2+)</name>
        <dbReference type="ChEBI" id="CHEBI:29035"/>
    </ligand>
</feature>
<feature type="binding site" evidence="2">
    <location>
        <position position="196"/>
    </location>
    <ligand>
        <name>Mn(2+)</name>
        <dbReference type="ChEBI" id="CHEBI:29035"/>
    </ligand>
</feature>
<feature type="binding site" evidence="2">
    <location>
        <position position="271"/>
    </location>
    <ligand>
        <name>Mn(2+)</name>
        <dbReference type="ChEBI" id="CHEBI:29035"/>
    </ligand>
</feature>
<feature type="lipid moiety-binding region" description="N-palmitoyl cysteine" evidence="3">
    <location>
        <position position="20"/>
    </location>
</feature>
<feature type="lipid moiety-binding region" description="S-diacylglycerol cysteine" evidence="3">
    <location>
        <position position="20"/>
    </location>
</feature>
<evidence type="ECO:0000250" key="1">
    <source>
        <dbReference type="UniProtKB" id="O34385"/>
    </source>
</evidence>
<evidence type="ECO:0000250" key="2">
    <source>
        <dbReference type="UniProtKB" id="Q8Y653"/>
    </source>
</evidence>
<evidence type="ECO:0000255" key="3">
    <source>
        <dbReference type="PROSITE-ProRule" id="PRU00303"/>
    </source>
</evidence>
<evidence type="ECO:0000305" key="4"/>
<accession>Q9KFG3</accession>
<dbReference type="EMBL" id="BA000004">
    <property type="protein sequence ID" value="BAB04235.1"/>
    <property type="molecule type" value="Genomic_DNA"/>
</dbReference>
<dbReference type="PIR" id="D83714">
    <property type="entry name" value="D83714"/>
</dbReference>
<dbReference type="RefSeq" id="WP_010896694.1">
    <property type="nucleotide sequence ID" value="NC_002570.2"/>
</dbReference>
<dbReference type="SMR" id="Q9KFG3"/>
<dbReference type="STRING" id="272558.gene:10726369"/>
<dbReference type="KEGG" id="bha:BH0516"/>
<dbReference type="eggNOG" id="COG0803">
    <property type="taxonomic scope" value="Bacteria"/>
</dbReference>
<dbReference type="HOGENOM" id="CLU_016838_1_1_9"/>
<dbReference type="OrthoDB" id="9793396at2"/>
<dbReference type="Proteomes" id="UP000001258">
    <property type="component" value="Chromosome"/>
</dbReference>
<dbReference type="GO" id="GO:0005886">
    <property type="term" value="C:plasma membrane"/>
    <property type="evidence" value="ECO:0007669"/>
    <property type="project" value="UniProtKB-SubCell"/>
</dbReference>
<dbReference type="GO" id="GO:0046872">
    <property type="term" value="F:metal ion binding"/>
    <property type="evidence" value="ECO:0007669"/>
    <property type="project" value="UniProtKB-KW"/>
</dbReference>
<dbReference type="GO" id="GO:0007155">
    <property type="term" value="P:cell adhesion"/>
    <property type="evidence" value="ECO:0007669"/>
    <property type="project" value="InterPro"/>
</dbReference>
<dbReference type="GO" id="GO:0030001">
    <property type="term" value="P:metal ion transport"/>
    <property type="evidence" value="ECO:0007669"/>
    <property type="project" value="InterPro"/>
</dbReference>
<dbReference type="CDD" id="cd01137">
    <property type="entry name" value="PsaA"/>
    <property type="match status" value="1"/>
</dbReference>
<dbReference type="Gene3D" id="3.40.50.1980">
    <property type="entry name" value="Nitrogenase molybdenum iron protein domain"/>
    <property type="match status" value="2"/>
</dbReference>
<dbReference type="InterPro" id="IPR006129">
    <property type="entry name" value="AdhesinB"/>
</dbReference>
<dbReference type="InterPro" id="IPR050492">
    <property type="entry name" value="Bact_metal-bind_prot9"/>
</dbReference>
<dbReference type="InterPro" id="IPR006128">
    <property type="entry name" value="Lipoprotein_PsaA-like"/>
</dbReference>
<dbReference type="InterPro" id="IPR006127">
    <property type="entry name" value="ZnuA-like"/>
</dbReference>
<dbReference type="PANTHER" id="PTHR42953">
    <property type="entry name" value="HIGH-AFFINITY ZINC UPTAKE SYSTEM PROTEIN ZNUA-RELATED"/>
    <property type="match status" value="1"/>
</dbReference>
<dbReference type="PANTHER" id="PTHR42953:SF1">
    <property type="entry name" value="METAL-BINDING PROTEIN HI_0362-RELATED"/>
    <property type="match status" value="1"/>
</dbReference>
<dbReference type="Pfam" id="PF01297">
    <property type="entry name" value="ZnuA"/>
    <property type="match status" value="1"/>
</dbReference>
<dbReference type="PRINTS" id="PR00691">
    <property type="entry name" value="ADHESINB"/>
</dbReference>
<dbReference type="PRINTS" id="PR00690">
    <property type="entry name" value="ADHESNFAMILY"/>
</dbReference>
<dbReference type="SUPFAM" id="SSF53807">
    <property type="entry name" value="Helical backbone' metal receptor"/>
    <property type="match status" value="1"/>
</dbReference>
<dbReference type="PROSITE" id="PS51257">
    <property type="entry name" value="PROKAR_LIPOPROTEIN"/>
    <property type="match status" value="1"/>
</dbReference>
<proteinExistence type="inferred from homology"/>
<organism>
    <name type="scientific">Halalkalibacterium halodurans (strain ATCC BAA-125 / DSM 18197 / FERM 7344 / JCM 9153 / C-125)</name>
    <name type="common">Bacillus halodurans</name>
    <dbReference type="NCBI Taxonomy" id="272558"/>
    <lineage>
        <taxon>Bacteria</taxon>
        <taxon>Bacillati</taxon>
        <taxon>Bacillota</taxon>
        <taxon>Bacilli</taxon>
        <taxon>Bacillales</taxon>
        <taxon>Bacillaceae</taxon>
        <taxon>Halalkalibacterium (ex Joshi et al. 2022)</taxon>
    </lineage>
</organism>
<name>MNTA_HALH5</name>
<gene>
    <name type="primary">mntA</name>
    <name type="synonym">psaA</name>
    <name type="ordered locus">BH0516</name>
</gene>
<protein>
    <recommendedName>
        <fullName>Manganese-binding lipoprotein MntA</fullName>
    </recommendedName>
</protein>